<sequence>MTNSRRHIFERICAKAFQSSLTCSIFGFTVLLILYLLDWKRIAQVPGPNLLKDLEFQRAWNDLEYISSLPHPYNSKQNEHVRSYILKSMRELEATNQSYITVIDDTLTNITFESTDNDTLTYFEGDNILVKFEGKSKDLFPILLSAHFDSVSTGYGATDDGMGVATVMAIARYYAKNQPNRDLIININNAEEDYLFGAKAFASHKLSKNVTAFVNLEGAGSGGKAMLFRSSNGHVSSAYFKGNHYPLASILGNDFFKRGVIRSQTDYIVYEKMHNHTAGLDIAFYENRDIYHTRKDDINHLMPSSLRHMMYTASNAVKNLLNDSKSDLTKFRKPMFFLAFGKYWQLNLPIYQVLNIIFAVICPIVLLLTLIRFPSLYEQLKKPRYTVCFVVSCIFVSIFDTLTVLLLTWINPYVINSHTGLILALFYLTNLIALAFSFRAAATHSKLSSEDLSSIEIVFIWYAQILWYLVFIVSVILSIYFQLGSTYWVTLSYLCTFTCCIMTIIRINYFVDNVVTTQTTHEEDALIGSSINTSSHQHYGSTLNSTPHRRNSIALSNRAHVKLIDNIWTVIYFIFNVPFPVFLCYDILVETILPAGSQTLTDSVFSSKLYKLVIFVVFLSLVNSGPFIFRALSKKSLAVLTMLWITLFVQALSVNPFTESAPLKLSFVQMYDMDRMNNTVYVKNISPFTQDVLSLNPHFLFSNGSCNTSLCYYESTDPDFGGLKTPMSIHIEREKHQLDISINSGSKWCYVDFNTSVFFEAINGNSISGMYSSVRMGQRSFYAPYTLNLTITEVVKAEVTCLYDDIHEGIIPAYNTFVEHLPSWVAGVKASTGLLKVKSSIVI</sequence>
<reference key="1">
    <citation type="journal article" date="2002" name="Nature">
        <title>The genome sequence of Schizosaccharomyces pombe.</title>
        <authorList>
            <person name="Wood V."/>
            <person name="Gwilliam R."/>
            <person name="Rajandream M.A."/>
            <person name="Lyne M.H."/>
            <person name="Lyne R."/>
            <person name="Stewart A."/>
            <person name="Sgouros J.G."/>
            <person name="Peat N."/>
            <person name="Hayles J."/>
            <person name="Baker S.G."/>
            <person name="Basham D."/>
            <person name="Bowman S."/>
            <person name="Brooks K."/>
            <person name="Brown D."/>
            <person name="Brown S."/>
            <person name="Chillingworth T."/>
            <person name="Churcher C.M."/>
            <person name="Collins M."/>
            <person name="Connor R."/>
            <person name="Cronin A."/>
            <person name="Davis P."/>
            <person name="Feltwell T."/>
            <person name="Fraser A."/>
            <person name="Gentles S."/>
            <person name="Goble A."/>
            <person name="Hamlin N."/>
            <person name="Harris D.E."/>
            <person name="Hidalgo J."/>
            <person name="Hodgson G."/>
            <person name="Holroyd S."/>
            <person name="Hornsby T."/>
            <person name="Howarth S."/>
            <person name="Huckle E.J."/>
            <person name="Hunt S."/>
            <person name="Jagels K."/>
            <person name="James K.D."/>
            <person name="Jones L."/>
            <person name="Jones M."/>
            <person name="Leather S."/>
            <person name="McDonald S."/>
            <person name="McLean J."/>
            <person name="Mooney P."/>
            <person name="Moule S."/>
            <person name="Mungall K.L."/>
            <person name="Murphy L.D."/>
            <person name="Niblett D."/>
            <person name="Odell C."/>
            <person name="Oliver K."/>
            <person name="O'Neil S."/>
            <person name="Pearson D."/>
            <person name="Quail M.A."/>
            <person name="Rabbinowitsch E."/>
            <person name="Rutherford K.M."/>
            <person name="Rutter S."/>
            <person name="Saunders D."/>
            <person name="Seeger K."/>
            <person name="Sharp S."/>
            <person name="Skelton J."/>
            <person name="Simmonds M.N."/>
            <person name="Squares R."/>
            <person name="Squares S."/>
            <person name="Stevens K."/>
            <person name="Taylor K."/>
            <person name="Taylor R.G."/>
            <person name="Tivey A."/>
            <person name="Walsh S.V."/>
            <person name="Warren T."/>
            <person name="Whitehead S."/>
            <person name="Woodward J.R."/>
            <person name="Volckaert G."/>
            <person name="Aert R."/>
            <person name="Robben J."/>
            <person name="Grymonprez B."/>
            <person name="Weltjens I."/>
            <person name="Vanstreels E."/>
            <person name="Rieger M."/>
            <person name="Schaefer M."/>
            <person name="Mueller-Auer S."/>
            <person name="Gabel C."/>
            <person name="Fuchs M."/>
            <person name="Duesterhoeft A."/>
            <person name="Fritzc C."/>
            <person name="Holzer E."/>
            <person name="Moestl D."/>
            <person name="Hilbert H."/>
            <person name="Borzym K."/>
            <person name="Langer I."/>
            <person name="Beck A."/>
            <person name="Lehrach H."/>
            <person name="Reinhardt R."/>
            <person name="Pohl T.M."/>
            <person name="Eger P."/>
            <person name="Zimmermann W."/>
            <person name="Wedler H."/>
            <person name="Wambutt R."/>
            <person name="Purnelle B."/>
            <person name="Goffeau A."/>
            <person name="Cadieu E."/>
            <person name="Dreano S."/>
            <person name="Gloux S."/>
            <person name="Lelaure V."/>
            <person name="Mottier S."/>
            <person name="Galibert F."/>
            <person name="Aves S.J."/>
            <person name="Xiang Z."/>
            <person name="Hunt C."/>
            <person name="Moore K."/>
            <person name="Hurst S.M."/>
            <person name="Lucas M."/>
            <person name="Rochet M."/>
            <person name="Gaillardin C."/>
            <person name="Tallada V.A."/>
            <person name="Garzon A."/>
            <person name="Thode G."/>
            <person name="Daga R.R."/>
            <person name="Cruzado L."/>
            <person name="Jimenez J."/>
            <person name="Sanchez M."/>
            <person name="del Rey F."/>
            <person name="Benito J."/>
            <person name="Dominguez A."/>
            <person name="Revuelta J.L."/>
            <person name="Moreno S."/>
            <person name="Armstrong J."/>
            <person name="Forsburg S.L."/>
            <person name="Cerutti L."/>
            <person name="Lowe T."/>
            <person name="McCombie W.R."/>
            <person name="Paulsen I."/>
            <person name="Potashkin J."/>
            <person name="Shpakovski G.V."/>
            <person name="Ussery D."/>
            <person name="Barrell B.G."/>
            <person name="Nurse P."/>
        </authorList>
    </citation>
    <scope>NUCLEOTIDE SEQUENCE [LARGE SCALE GENOMIC DNA]</scope>
    <source>
        <strain>972 / ATCC 24843</strain>
    </source>
</reference>
<reference key="2">
    <citation type="journal article" date="2000" name="Genes Cells">
        <title>Large-scale screening of intracellular protein localization in living fission yeast cells by the use of a GFP-fusion genomic DNA library.</title>
        <authorList>
            <person name="Ding D.-Q."/>
            <person name="Tomita Y."/>
            <person name="Yamamoto A."/>
            <person name="Chikashige Y."/>
            <person name="Haraguchi T."/>
            <person name="Hiraoka Y."/>
        </authorList>
    </citation>
    <scope>NUCLEOTIDE SEQUENCE [LARGE SCALE GENOMIC DNA] OF 521-705</scope>
    <scope>SUBCELLULAR LOCATION</scope>
    <source>
        <strain>ATCC 38364 / 968</strain>
    </source>
</reference>
<protein>
    <recommendedName>
        <fullName evidence="1">Vacuolar membrane protease</fullName>
        <ecNumber evidence="6">3.4.-.-</ecNumber>
    </recommendedName>
    <alternativeName>
        <fullName evidence="1">FXNA-related family protease 1</fullName>
    </alternativeName>
</protein>
<feature type="chain" id="PRO_0000174139" description="Vacuolar membrane protease">
    <location>
        <begin position="1"/>
        <end position="843"/>
    </location>
</feature>
<feature type="topological domain" description="Cytoplasmic" evidence="1">
    <location>
        <begin position="1"/>
        <end position="16"/>
    </location>
</feature>
<feature type="transmembrane region" description="Helical; Name=1" evidence="3">
    <location>
        <begin position="17"/>
        <end position="37"/>
    </location>
</feature>
<feature type="topological domain" description="Vacuolar" evidence="1">
    <location>
        <begin position="38"/>
        <end position="347"/>
    </location>
</feature>
<feature type="transmembrane region" description="Helical; Name=2" evidence="3">
    <location>
        <begin position="348"/>
        <end position="368"/>
    </location>
</feature>
<feature type="topological domain" description="Cytoplasmic" evidence="1">
    <location>
        <begin position="369"/>
        <end position="386"/>
    </location>
</feature>
<feature type="transmembrane region" description="Helical; Name=3" evidence="3">
    <location>
        <begin position="387"/>
        <end position="407"/>
    </location>
</feature>
<feature type="topological domain" description="Vacuolar" evidence="1">
    <location>
        <begin position="408"/>
        <end position="417"/>
    </location>
</feature>
<feature type="transmembrane region" description="Helical; Name=4" evidence="3">
    <location>
        <begin position="418"/>
        <end position="438"/>
    </location>
</feature>
<feature type="topological domain" description="Cytoplasmic" evidence="1">
    <location>
        <begin position="439"/>
        <end position="456"/>
    </location>
</feature>
<feature type="transmembrane region" description="Helical; Name=5" evidence="3">
    <location>
        <begin position="457"/>
        <end position="477"/>
    </location>
</feature>
<feature type="topological domain" description="Vacuolar" evidence="1">
    <location>
        <begin position="478"/>
        <end position="484"/>
    </location>
</feature>
<feature type="transmembrane region" description="Helical; Name=6" evidence="3">
    <location>
        <begin position="485"/>
        <end position="505"/>
    </location>
</feature>
<feature type="topological domain" description="Cytoplasmic" evidence="1">
    <location>
        <begin position="506"/>
        <end position="566"/>
    </location>
</feature>
<feature type="transmembrane region" description="Helical; Name=7" evidence="3">
    <location>
        <begin position="567"/>
        <end position="587"/>
    </location>
</feature>
<feature type="topological domain" description="Vacuolar" evidence="1">
    <location>
        <begin position="588"/>
        <end position="608"/>
    </location>
</feature>
<feature type="transmembrane region" description="Helical; Name=8" evidence="3">
    <location>
        <begin position="609"/>
        <end position="629"/>
    </location>
</feature>
<feature type="topological domain" description="Cytoplasmic" evidence="1">
    <location>
        <begin position="630"/>
        <end position="636"/>
    </location>
</feature>
<feature type="transmembrane region" description="Helical; Name=9" evidence="3">
    <location>
        <begin position="637"/>
        <end position="657"/>
    </location>
</feature>
<feature type="topological domain" description="Vacuolar" evidence="1">
    <location>
        <begin position="658"/>
        <end position="843"/>
    </location>
</feature>
<feature type="active site" description="Proton acceptor" evidence="2">
    <location>
        <position position="191"/>
    </location>
</feature>
<feature type="binding site" evidence="2">
    <location>
        <position position="147"/>
    </location>
    <ligand>
        <name>Zn(2+)</name>
        <dbReference type="ChEBI" id="CHEBI:29105"/>
        <label>1</label>
        <note>catalytic</note>
    </ligand>
</feature>
<feature type="binding site" evidence="2">
    <location>
        <position position="159"/>
    </location>
    <ligand>
        <name>Zn(2+)</name>
        <dbReference type="ChEBI" id="CHEBI:29105"/>
        <label>1</label>
        <note>catalytic</note>
    </ligand>
</feature>
<feature type="binding site" evidence="2">
    <location>
        <position position="159"/>
    </location>
    <ligand>
        <name>Zn(2+)</name>
        <dbReference type="ChEBI" id="CHEBI:29105"/>
        <label>2</label>
        <note>catalytic</note>
    </ligand>
</feature>
<feature type="binding site" evidence="2">
    <location>
        <position position="192"/>
    </location>
    <ligand>
        <name>Zn(2+)</name>
        <dbReference type="ChEBI" id="CHEBI:29105"/>
        <label>2</label>
        <note>catalytic</note>
    </ligand>
</feature>
<feature type="binding site" evidence="2">
    <location>
        <position position="217"/>
    </location>
    <ligand>
        <name>Zn(2+)</name>
        <dbReference type="ChEBI" id="CHEBI:29105"/>
        <label>1</label>
        <note>catalytic</note>
    </ligand>
</feature>
<feature type="binding site" evidence="2">
    <location>
        <position position="292"/>
    </location>
    <ligand>
        <name>Zn(2+)</name>
        <dbReference type="ChEBI" id="CHEBI:29105"/>
        <label>2</label>
        <note>catalytic</note>
    </ligand>
</feature>
<feature type="site" description="Transition state stabilizer" evidence="2">
    <location>
        <position position="291"/>
    </location>
</feature>
<feature type="glycosylation site" description="N-linked (GlcNAc...) asparagine" evidence="4">
    <location>
        <position position="96"/>
    </location>
</feature>
<feature type="glycosylation site" description="N-linked (GlcNAc...) asparagine" evidence="4">
    <location>
        <position position="109"/>
    </location>
</feature>
<feature type="glycosylation site" description="N-linked (GlcNAc...) asparagine" evidence="4">
    <location>
        <position position="117"/>
    </location>
</feature>
<feature type="glycosylation site" description="N-linked (GlcNAc...) asparagine" evidence="4">
    <location>
        <position position="209"/>
    </location>
</feature>
<feature type="glycosylation site" description="N-linked (GlcNAc...) asparagine" evidence="4">
    <location>
        <position position="275"/>
    </location>
</feature>
<feature type="glycosylation site" description="N-linked (GlcNAc...) asparagine" evidence="4">
    <location>
        <position position="322"/>
    </location>
</feature>
<feature type="glycosylation site" description="N-linked (GlcNAc...) asparagine" evidence="4">
    <location>
        <position position="677"/>
    </location>
</feature>
<feature type="glycosylation site" description="N-linked (GlcNAc...) asparagine" evidence="4">
    <location>
        <position position="703"/>
    </location>
</feature>
<feature type="glycosylation site" description="N-linked (GlcNAc...) asparagine" evidence="4">
    <location>
        <position position="707"/>
    </location>
</feature>
<feature type="glycosylation site" description="N-linked (GlcNAc...) asparagine" evidence="4">
    <location>
        <position position="754"/>
    </location>
</feature>
<feature type="glycosylation site" description="N-linked (GlcNAc...) asparagine" evidence="4">
    <location>
        <position position="788"/>
    </location>
</feature>
<feature type="sequence conflict" description="In Ref. 2; BAA87092." evidence="6" ref="2">
    <original>HEEDALIG</original>
    <variation>IQRRRTDW</variation>
    <location>
        <begin position="521"/>
        <end position="528"/>
    </location>
</feature>
<feature type="sequence conflict" description="In Ref. 2; BAA87121." evidence="6" ref="2">
    <original>SGPFIFRALSKKSLAV</original>
    <variation>QWTFHISCLVKKVACC</variation>
    <location>
        <begin position="624"/>
        <end position="639"/>
    </location>
</feature>
<comment type="function">
    <text evidence="1">May be involved in vacuolar sorting and osmoregulation.</text>
</comment>
<comment type="cofactor">
    <cofactor evidence="2">
        <name>Zn(2+)</name>
        <dbReference type="ChEBI" id="CHEBI:29105"/>
    </cofactor>
    <text evidence="2">Binds 2 Zn(2+) ions per subunit.</text>
</comment>
<comment type="subcellular location">
    <subcellularLocation>
        <location evidence="5">Membrane</location>
    </subcellularLocation>
    <subcellularLocation>
        <location evidence="1">Vacuole membrane</location>
        <topology evidence="3">Multi-pass membrane protein</topology>
    </subcellularLocation>
</comment>
<comment type="similarity">
    <text evidence="6">Belongs to the peptidase M28 family.</text>
</comment>
<gene>
    <name evidence="7" type="ORF">SPCC1919.12c</name>
</gene>
<proteinExistence type="inferred from homology"/>
<organism>
    <name type="scientific">Schizosaccharomyces pombe (strain 972 / ATCC 24843)</name>
    <name type="common">Fission yeast</name>
    <dbReference type="NCBI Taxonomy" id="284812"/>
    <lineage>
        <taxon>Eukaryota</taxon>
        <taxon>Fungi</taxon>
        <taxon>Dikarya</taxon>
        <taxon>Ascomycota</taxon>
        <taxon>Taphrinomycotina</taxon>
        <taxon>Schizosaccharomycetes</taxon>
        <taxon>Schizosaccharomycetales</taxon>
        <taxon>Schizosaccharomycetaceae</taxon>
        <taxon>Schizosaccharomyces</taxon>
    </lineage>
</organism>
<name>PFF1_SCHPO</name>
<accession>O94479</accession>
<accession>Q9UU46</accession>
<dbReference type="EC" id="3.4.-.-" evidence="6"/>
<dbReference type="EMBL" id="CU329672">
    <property type="protein sequence ID" value="CAA22643.1"/>
    <property type="molecule type" value="Genomic_DNA"/>
</dbReference>
<dbReference type="EMBL" id="AB027788">
    <property type="protein sequence ID" value="BAA87092.1"/>
    <property type="molecule type" value="Genomic_DNA"/>
</dbReference>
<dbReference type="EMBL" id="AB027817">
    <property type="protein sequence ID" value="BAA87121.1"/>
    <property type="molecule type" value="Genomic_DNA"/>
</dbReference>
<dbReference type="PIR" id="T41237">
    <property type="entry name" value="T41237"/>
</dbReference>
<dbReference type="SMR" id="O94479"/>
<dbReference type="BioGRID" id="275729">
    <property type="interactions" value="4"/>
</dbReference>
<dbReference type="FunCoup" id="O94479">
    <property type="interactions" value="16"/>
</dbReference>
<dbReference type="iPTMnet" id="O94479"/>
<dbReference type="PaxDb" id="4896-SPCC1919.12c.1"/>
<dbReference type="EnsemblFungi" id="SPCC1919.12c.1">
    <property type="protein sequence ID" value="SPCC1919.12c.1:pep"/>
    <property type="gene ID" value="SPCC1919.12c"/>
</dbReference>
<dbReference type="KEGG" id="spo:2539157"/>
<dbReference type="PomBase" id="SPCC1919.12c"/>
<dbReference type="VEuPathDB" id="FungiDB:SPCC1919.12c"/>
<dbReference type="eggNOG" id="KOG2194">
    <property type="taxonomic scope" value="Eukaryota"/>
</dbReference>
<dbReference type="HOGENOM" id="CLU_006412_1_0_1"/>
<dbReference type="InParanoid" id="O94479"/>
<dbReference type="OMA" id="FCHTFVN"/>
<dbReference type="PhylomeDB" id="O94479"/>
<dbReference type="PRO" id="PR:O94479"/>
<dbReference type="Proteomes" id="UP000002485">
    <property type="component" value="Chromosome III"/>
</dbReference>
<dbReference type="GO" id="GO:0005829">
    <property type="term" value="C:cytosol"/>
    <property type="evidence" value="ECO:0007005"/>
    <property type="project" value="PomBase"/>
</dbReference>
<dbReference type="GO" id="GO:0000329">
    <property type="term" value="C:fungal-type vacuole membrane"/>
    <property type="evidence" value="ECO:0000266"/>
    <property type="project" value="PomBase"/>
</dbReference>
<dbReference type="GO" id="GO:0046872">
    <property type="term" value="F:metal ion binding"/>
    <property type="evidence" value="ECO:0007669"/>
    <property type="project" value="UniProtKB-KW"/>
</dbReference>
<dbReference type="GO" id="GO:0008235">
    <property type="term" value="F:metalloexopeptidase activity"/>
    <property type="evidence" value="ECO:0007669"/>
    <property type="project" value="InterPro"/>
</dbReference>
<dbReference type="GO" id="GO:0006508">
    <property type="term" value="P:proteolysis"/>
    <property type="evidence" value="ECO:0000318"/>
    <property type="project" value="GO_Central"/>
</dbReference>
<dbReference type="GO" id="GO:0051603">
    <property type="term" value="P:proteolysis involved in protein catabolic process"/>
    <property type="evidence" value="ECO:0000303"/>
    <property type="project" value="PomBase"/>
</dbReference>
<dbReference type="CDD" id="cd03875">
    <property type="entry name" value="M28_Fxna_like"/>
    <property type="match status" value="1"/>
</dbReference>
<dbReference type="FunFam" id="3.40.630.10:FF:000057">
    <property type="entry name" value="Vacuolar membrane protease"/>
    <property type="match status" value="1"/>
</dbReference>
<dbReference type="Gene3D" id="3.40.630.10">
    <property type="entry name" value="Zn peptidases"/>
    <property type="match status" value="1"/>
</dbReference>
<dbReference type="InterPro" id="IPR048024">
    <property type="entry name" value="Fxna-like_M28_dom"/>
</dbReference>
<dbReference type="InterPro" id="IPR045175">
    <property type="entry name" value="M28_fam"/>
</dbReference>
<dbReference type="InterPro" id="IPR007484">
    <property type="entry name" value="Peptidase_M28"/>
</dbReference>
<dbReference type="PANTHER" id="PTHR12147">
    <property type="entry name" value="METALLOPEPTIDASE M28 FAMILY MEMBER"/>
    <property type="match status" value="1"/>
</dbReference>
<dbReference type="PANTHER" id="PTHR12147:SF58">
    <property type="entry name" value="VACUOLAR MEMBRANE PROTEASE"/>
    <property type="match status" value="1"/>
</dbReference>
<dbReference type="Pfam" id="PF04389">
    <property type="entry name" value="Peptidase_M28"/>
    <property type="match status" value="1"/>
</dbReference>
<dbReference type="SUPFAM" id="SSF53187">
    <property type="entry name" value="Zn-dependent exopeptidases"/>
    <property type="match status" value="1"/>
</dbReference>
<evidence type="ECO:0000250" key="1">
    <source>
        <dbReference type="UniProtKB" id="P38244"/>
    </source>
</evidence>
<evidence type="ECO:0000250" key="2">
    <source>
        <dbReference type="UniProtKB" id="P80561"/>
    </source>
</evidence>
<evidence type="ECO:0000255" key="3"/>
<evidence type="ECO:0000255" key="4">
    <source>
        <dbReference type="PROSITE-ProRule" id="PRU00498"/>
    </source>
</evidence>
<evidence type="ECO:0000269" key="5">
    <source>
    </source>
</evidence>
<evidence type="ECO:0000305" key="6"/>
<evidence type="ECO:0000312" key="7">
    <source>
        <dbReference type="PomBase" id="SPCC1919.12c"/>
    </source>
</evidence>
<keyword id="KW-0325">Glycoprotein</keyword>
<keyword id="KW-0378">Hydrolase</keyword>
<keyword id="KW-0472">Membrane</keyword>
<keyword id="KW-0479">Metal-binding</keyword>
<keyword id="KW-0482">Metalloprotease</keyword>
<keyword id="KW-0645">Protease</keyword>
<keyword id="KW-1185">Reference proteome</keyword>
<keyword id="KW-0812">Transmembrane</keyword>
<keyword id="KW-1133">Transmembrane helix</keyword>
<keyword id="KW-0926">Vacuole</keyword>
<keyword id="KW-0862">Zinc</keyword>